<accession>A9MYA6</accession>
<evidence type="ECO:0000255" key="1">
    <source>
        <dbReference type="HAMAP-Rule" id="MF_01636"/>
    </source>
</evidence>
<evidence type="ECO:0000305" key="2"/>
<organism>
    <name type="scientific">Salmonella paratyphi B (strain ATCC BAA-1250 / SPB7)</name>
    <dbReference type="NCBI Taxonomy" id="1016998"/>
    <lineage>
        <taxon>Bacteria</taxon>
        <taxon>Pseudomonadati</taxon>
        <taxon>Pseudomonadota</taxon>
        <taxon>Gammaproteobacteria</taxon>
        <taxon>Enterobacterales</taxon>
        <taxon>Enterobacteriaceae</taxon>
        <taxon>Salmonella</taxon>
    </lineage>
</organism>
<reference key="1">
    <citation type="submission" date="2007-11" db="EMBL/GenBank/DDBJ databases">
        <authorList>
            <consortium name="The Salmonella enterica serovar Paratyphi B Genome Sequencing Project"/>
            <person name="McClelland M."/>
            <person name="Sanderson E.K."/>
            <person name="Porwollik S."/>
            <person name="Spieth J."/>
            <person name="Clifton W.S."/>
            <person name="Fulton R."/>
            <person name="Cordes M."/>
            <person name="Wollam A."/>
            <person name="Shah N."/>
            <person name="Pepin K."/>
            <person name="Bhonagiri V."/>
            <person name="Nash W."/>
            <person name="Johnson M."/>
            <person name="Thiruvilangam P."/>
            <person name="Wilson R."/>
        </authorList>
    </citation>
    <scope>NUCLEOTIDE SEQUENCE [LARGE SCALE GENOMIC DNA]</scope>
    <source>
        <strain>ATCC BAA-1250 / SPB7</strain>
    </source>
</reference>
<dbReference type="EC" id="4.1.1.98" evidence="1"/>
<dbReference type="EMBL" id="CP000886">
    <property type="protein sequence ID" value="ABX70234.1"/>
    <property type="status" value="ALT_INIT"/>
    <property type="molecule type" value="Genomic_DNA"/>
</dbReference>
<dbReference type="SMR" id="A9MYA6"/>
<dbReference type="KEGG" id="spq:SPAB_04935"/>
<dbReference type="PATRIC" id="fig|1016998.12.peg.4633"/>
<dbReference type="HOGENOM" id="CLU_023348_4_1_6"/>
<dbReference type="UniPathway" id="UPA00232"/>
<dbReference type="Proteomes" id="UP000008556">
    <property type="component" value="Chromosome"/>
</dbReference>
<dbReference type="GO" id="GO:0005829">
    <property type="term" value="C:cytosol"/>
    <property type="evidence" value="ECO:0007669"/>
    <property type="project" value="TreeGrafter"/>
</dbReference>
<dbReference type="GO" id="GO:0005886">
    <property type="term" value="C:plasma membrane"/>
    <property type="evidence" value="ECO:0007669"/>
    <property type="project" value="UniProtKB-SubCell"/>
</dbReference>
<dbReference type="GO" id="GO:0008694">
    <property type="term" value="F:3-octaprenyl-4-hydroxybenzoate carboxy-lyase activity"/>
    <property type="evidence" value="ECO:0007669"/>
    <property type="project" value="UniProtKB-UniRule"/>
</dbReference>
<dbReference type="GO" id="GO:0046872">
    <property type="term" value="F:metal ion binding"/>
    <property type="evidence" value="ECO:0007669"/>
    <property type="project" value="UniProtKB-KW"/>
</dbReference>
<dbReference type="GO" id="GO:0006744">
    <property type="term" value="P:ubiquinone biosynthetic process"/>
    <property type="evidence" value="ECO:0007669"/>
    <property type="project" value="UniProtKB-UniRule"/>
</dbReference>
<dbReference type="FunFam" id="1.20.5.570:FF:000001">
    <property type="entry name" value="3-octaprenyl-4-hydroxybenzoate carboxy-lyase"/>
    <property type="match status" value="1"/>
</dbReference>
<dbReference type="FunFam" id="3.40.1670.10:FF:000001">
    <property type="entry name" value="3-octaprenyl-4-hydroxybenzoate carboxy-lyase"/>
    <property type="match status" value="1"/>
</dbReference>
<dbReference type="Gene3D" id="1.20.5.570">
    <property type="entry name" value="Single helix bin"/>
    <property type="match status" value="1"/>
</dbReference>
<dbReference type="Gene3D" id="3.40.1670.10">
    <property type="entry name" value="UbiD C-terminal domain-like"/>
    <property type="match status" value="1"/>
</dbReference>
<dbReference type="HAMAP" id="MF_01636">
    <property type="entry name" value="UbiD"/>
    <property type="match status" value="1"/>
</dbReference>
<dbReference type="InterPro" id="IPR002830">
    <property type="entry name" value="UbiD"/>
</dbReference>
<dbReference type="InterPro" id="IPR049381">
    <property type="entry name" value="UbiD-like_C"/>
</dbReference>
<dbReference type="InterPro" id="IPR049383">
    <property type="entry name" value="UbiD-like_N"/>
</dbReference>
<dbReference type="InterPro" id="IPR023677">
    <property type="entry name" value="UbiD_bacteria"/>
</dbReference>
<dbReference type="InterPro" id="IPR048304">
    <property type="entry name" value="UbiD_Rift_dom"/>
</dbReference>
<dbReference type="NCBIfam" id="NF008175">
    <property type="entry name" value="PRK10922.1"/>
    <property type="match status" value="1"/>
</dbReference>
<dbReference type="NCBIfam" id="TIGR00148">
    <property type="entry name" value="UbiD family decarboxylase"/>
    <property type="match status" value="1"/>
</dbReference>
<dbReference type="PANTHER" id="PTHR30108">
    <property type="entry name" value="3-OCTAPRENYL-4-HYDROXYBENZOATE CARBOXY-LYASE-RELATED"/>
    <property type="match status" value="1"/>
</dbReference>
<dbReference type="PANTHER" id="PTHR30108:SF17">
    <property type="entry name" value="FERULIC ACID DECARBOXYLASE 1"/>
    <property type="match status" value="1"/>
</dbReference>
<dbReference type="Pfam" id="PF01977">
    <property type="entry name" value="UbiD"/>
    <property type="match status" value="1"/>
</dbReference>
<dbReference type="Pfam" id="PF20696">
    <property type="entry name" value="UbiD_C"/>
    <property type="match status" value="1"/>
</dbReference>
<dbReference type="Pfam" id="PF20695">
    <property type="entry name" value="UbiD_N"/>
    <property type="match status" value="1"/>
</dbReference>
<dbReference type="SUPFAM" id="SSF50475">
    <property type="entry name" value="FMN-binding split barrel"/>
    <property type="match status" value="1"/>
</dbReference>
<dbReference type="SUPFAM" id="SSF143968">
    <property type="entry name" value="UbiD C-terminal domain-like"/>
    <property type="match status" value="1"/>
</dbReference>
<keyword id="KW-1003">Cell membrane</keyword>
<keyword id="KW-0210">Decarboxylase</keyword>
<keyword id="KW-0285">Flavoprotein</keyword>
<keyword id="KW-0288">FMN</keyword>
<keyword id="KW-0456">Lyase</keyword>
<keyword id="KW-0464">Manganese</keyword>
<keyword id="KW-0472">Membrane</keyword>
<keyword id="KW-0479">Metal-binding</keyword>
<keyword id="KW-0831">Ubiquinone biosynthesis</keyword>
<comment type="function">
    <text evidence="1">Catalyzes the decarboxylation of 3-octaprenyl-4-hydroxy benzoate to 2-octaprenylphenol, an intermediate step in ubiquinone biosynthesis.</text>
</comment>
<comment type="catalytic activity">
    <reaction evidence="1">
        <text>a 4-hydroxy-3-(all-trans-polyprenyl)benzoate + H(+) = a 2-(all-trans-polyprenyl)phenol + CO2</text>
        <dbReference type="Rhea" id="RHEA:41680"/>
        <dbReference type="Rhea" id="RHEA-COMP:9514"/>
        <dbReference type="Rhea" id="RHEA-COMP:9516"/>
        <dbReference type="ChEBI" id="CHEBI:1269"/>
        <dbReference type="ChEBI" id="CHEBI:15378"/>
        <dbReference type="ChEBI" id="CHEBI:16526"/>
        <dbReference type="ChEBI" id="CHEBI:78396"/>
        <dbReference type="EC" id="4.1.1.98"/>
    </reaction>
</comment>
<comment type="cofactor">
    <cofactor evidence="1">
        <name>prenylated FMN</name>
        <dbReference type="ChEBI" id="CHEBI:87746"/>
    </cofactor>
    <text evidence="1">Binds 1 prenylated FMN per subunit.</text>
</comment>
<comment type="cofactor">
    <cofactor evidence="1">
        <name>Mn(2+)</name>
        <dbReference type="ChEBI" id="CHEBI:29035"/>
    </cofactor>
</comment>
<comment type="pathway">
    <text evidence="1">Cofactor biosynthesis; ubiquinone biosynthesis.</text>
</comment>
<comment type="subunit">
    <text evidence="1">Homohexamer.</text>
</comment>
<comment type="subcellular location">
    <subcellularLocation>
        <location evidence="1">Cell membrane</location>
        <topology evidence="1">Peripheral membrane protein</topology>
    </subcellularLocation>
</comment>
<comment type="similarity">
    <text evidence="1">Belongs to the UbiD family.</text>
</comment>
<comment type="sequence caution" evidence="2">
    <conflict type="erroneous initiation">
        <sequence resource="EMBL-CDS" id="ABX70234"/>
    </conflict>
</comment>
<gene>
    <name evidence="1" type="primary">ubiD</name>
    <name type="ordered locus">SPAB_04935</name>
</gene>
<name>UBID_SALPB</name>
<feature type="chain" id="PRO_0000335869" description="3-octaprenyl-4-hydroxybenzoate carboxy-lyase">
    <location>
        <begin position="1"/>
        <end position="489"/>
    </location>
</feature>
<feature type="active site" description="Proton donor" evidence="1">
    <location>
        <position position="287"/>
    </location>
</feature>
<feature type="binding site" evidence="1">
    <location>
        <position position="172"/>
    </location>
    <ligand>
        <name>Mn(2+)</name>
        <dbReference type="ChEBI" id="CHEBI:29035"/>
    </ligand>
</feature>
<feature type="binding site" evidence="1">
    <location>
        <begin position="175"/>
        <end position="177"/>
    </location>
    <ligand>
        <name>prenylated FMN</name>
        <dbReference type="ChEBI" id="CHEBI:87746"/>
    </ligand>
</feature>
<feature type="binding site" evidence="1">
    <location>
        <begin position="189"/>
        <end position="191"/>
    </location>
    <ligand>
        <name>prenylated FMN</name>
        <dbReference type="ChEBI" id="CHEBI:87746"/>
    </ligand>
</feature>
<feature type="binding site" evidence="1">
    <location>
        <begin position="194"/>
        <end position="195"/>
    </location>
    <ligand>
        <name>prenylated FMN</name>
        <dbReference type="ChEBI" id="CHEBI:87746"/>
    </ligand>
</feature>
<feature type="binding site" evidence="1">
    <location>
        <position position="238"/>
    </location>
    <ligand>
        <name>Mn(2+)</name>
        <dbReference type="ChEBI" id="CHEBI:29035"/>
    </ligand>
</feature>
<sequence length="489" mass="54816">MKYHDLRDFLTLLEQQGELKRITLPVDPHLEITEIADRTLRAGGPALLFENPKGYAMPVLCNLFGTPKRVAMGMGQDDVSALREVGKLLAFLKEPEPPKGFRDLFDKLPQFKQVLNMPTKRLRGAPCQQKIASGDDVDLTRLPVMTCWPDDAAPLITWGLTVTRGPHKERQNLGIYRQQLIGKNKLIMRWLSHRGGALDFQEWLAARPGERFPVSVALGADPATILGAVTPVPDTLSEYAFAGLLRGTKTEVVKCLSNDLEAPASAEIILEGYIEPGEMAPEGPYGDHTGYYNEVDNFPVFTVTHITQREDAIYHSTYTGRPPDEPAVLGVALNEVFVPILQKQFPEIVDFYLPPEGCSYRLAVVTMKKQYAGHAKRVMMGVWSFLRQFMYTKFVIVCDDDVNARDWNDVIWAITTRMDPARDTVLVENTPIDYLDFASPVSGLGSKMGLDATNKWPGETQREWGRPIVKDPEVTARIDAIWDELAIFK</sequence>
<protein>
    <recommendedName>
        <fullName evidence="1">3-octaprenyl-4-hydroxybenzoate carboxy-lyase</fullName>
        <ecNumber evidence="1">4.1.1.98</ecNumber>
    </recommendedName>
    <alternativeName>
        <fullName evidence="1">Polyprenyl p-hydroxybenzoate decarboxylase</fullName>
    </alternativeName>
</protein>
<proteinExistence type="inferred from homology"/>